<gene>
    <name type="primary">Sbk3</name>
    <name type="synonym">Gm1078</name>
    <name type="synonym">Sgk110</name>
</gene>
<comment type="catalytic activity">
    <reaction>
        <text>L-seryl-[protein] + ATP = O-phospho-L-seryl-[protein] + ADP + H(+)</text>
        <dbReference type="Rhea" id="RHEA:17989"/>
        <dbReference type="Rhea" id="RHEA-COMP:9863"/>
        <dbReference type="Rhea" id="RHEA-COMP:11604"/>
        <dbReference type="ChEBI" id="CHEBI:15378"/>
        <dbReference type="ChEBI" id="CHEBI:29999"/>
        <dbReference type="ChEBI" id="CHEBI:30616"/>
        <dbReference type="ChEBI" id="CHEBI:83421"/>
        <dbReference type="ChEBI" id="CHEBI:456216"/>
        <dbReference type="EC" id="2.7.11.1"/>
    </reaction>
</comment>
<comment type="catalytic activity">
    <reaction>
        <text>L-threonyl-[protein] + ATP = O-phospho-L-threonyl-[protein] + ADP + H(+)</text>
        <dbReference type="Rhea" id="RHEA:46608"/>
        <dbReference type="Rhea" id="RHEA-COMP:11060"/>
        <dbReference type="Rhea" id="RHEA-COMP:11605"/>
        <dbReference type="ChEBI" id="CHEBI:15378"/>
        <dbReference type="ChEBI" id="CHEBI:30013"/>
        <dbReference type="ChEBI" id="CHEBI:30616"/>
        <dbReference type="ChEBI" id="CHEBI:61977"/>
        <dbReference type="ChEBI" id="CHEBI:456216"/>
        <dbReference type="EC" id="2.7.11.1"/>
    </reaction>
</comment>
<comment type="alternative products">
    <event type="alternative splicing"/>
    <isoform>
        <id>P0C5K0-1</id>
        <name>1</name>
        <sequence type="displayed"/>
    </isoform>
    <isoform>
        <id>P0C5K0-2</id>
        <name>2</name>
        <sequence type="described" ref="VSP_053507"/>
    </isoform>
</comment>
<comment type="similarity">
    <text evidence="1">Belongs to the protein kinase superfamily. Ser/Thr protein kinase family. STKL subfamily.</text>
</comment>
<organism>
    <name type="scientific">Mus musculus</name>
    <name type="common">Mouse</name>
    <dbReference type="NCBI Taxonomy" id="10090"/>
    <lineage>
        <taxon>Eukaryota</taxon>
        <taxon>Metazoa</taxon>
        <taxon>Chordata</taxon>
        <taxon>Craniata</taxon>
        <taxon>Vertebrata</taxon>
        <taxon>Euteleostomi</taxon>
        <taxon>Mammalia</taxon>
        <taxon>Eutheria</taxon>
        <taxon>Euarchontoglires</taxon>
        <taxon>Glires</taxon>
        <taxon>Rodentia</taxon>
        <taxon>Myomorpha</taxon>
        <taxon>Muroidea</taxon>
        <taxon>Muridae</taxon>
        <taxon>Murinae</taxon>
        <taxon>Mus</taxon>
        <taxon>Mus</taxon>
    </lineage>
</organism>
<protein>
    <recommendedName>
        <fullName>Uncharacterized serine/threonine-protein kinase SBK3</fullName>
        <ecNumber>2.7.11.1</ecNumber>
    </recommendedName>
    <alternativeName>
        <fullName>SH3 domain-binding kinase family member 3</fullName>
    </alternativeName>
    <alternativeName>
        <fullName>Sugen kinase 110</fullName>
    </alternativeName>
</protein>
<reference key="1">
    <citation type="journal article" date="2009" name="PLoS Biol.">
        <title>Lineage-specific biology revealed by a finished genome assembly of the mouse.</title>
        <authorList>
            <person name="Church D.M."/>
            <person name="Goodstadt L."/>
            <person name="Hillier L.W."/>
            <person name="Zody M.C."/>
            <person name="Goldstein S."/>
            <person name="She X."/>
            <person name="Bult C.J."/>
            <person name="Agarwala R."/>
            <person name="Cherry J.L."/>
            <person name="DiCuccio M."/>
            <person name="Hlavina W."/>
            <person name="Kapustin Y."/>
            <person name="Meric P."/>
            <person name="Maglott D."/>
            <person name="Birtle Z."/>
            <person name="Marques A.C."/>
            <person name="Graves T."/>
            <person name="Zhou S."/>
            <person name="Teague B."/>
            <person name="Potamousis K."/>
            <person name="Churas C."/>
            <person name="Place M."/>
            <person name="Herschleb J."/>
            <person name="Runnheim R."/>
            <person name="Forrest D."/>
            <person name="Amos-Landgraf J."/>
            <person name="Schwartz D.C."/>
            <person name="Cheng Z."/>
            <person name="Lindblad-Toh K."/>
            <person name="Eichler E.E."/>
            <person name="Ponting C.P."/>
        </authorList>
    </citation>
    <scope>NUCLEOTIDE SEQUENCE [LARGE SCALE GENOMIC DNA]</scope>
    <source>
        <strain>C57BL/6J</strain>
    </source>
</reference>
<evidence type="ECO:0000255" key="1">
    <source>
        <dbReference type="PROSITE-ProRule" id="PRU00159"/>
    </source>
</evidence>
<evidence type="ECO:0000255" key="2">
    <source>
        <dbReference type="PROSITE-ProRule" id="PRU10027"/>
    </source>
</evidence>
<evidence type="ECO:0000256" key="3">
    <source>
        <dbReference type="SAM" id="MobiDB-lite"/>
    </source>
</evidence>
<evidence type="ECO:0000305" key="4"/>
<name>SBK3_MOUSE</name>
<dbReference type="EC" id="2.7.11.1"/>
<dbReference type="EMBL" id="AC157563">
    <property type="status" value="NOT_ANNOTATED_CDS"/>
    <property type="molecule type" value="Genomic_DNA"/>
</dbReference>
<dbReference type="CCDS" id="CCDS57475.1">
    <molecule id="P0C5K0-2"/>
</dbReference>
<dbReference type="RefSeq" id="NP_001186970.1">
    <molecule id="P0C5K0-2"/>
    <property type="nucleotide sequence ID" value="NM_001200041.1"/>
</dbReference>
<dbReference type="RefSeq" id="XP_006540196.1">
    <molecule id="P0C5K0-1"/>
    <property type="nucleotide sequence ID" value="XM_006540133.5"/>
</dbReference>
<dbReference type="RefSeq" id="XP_006540197.1">
    <property type="nucleotide sequence ID" value="XM_006540134.3"/>
</dbReference>
<dbReference type="RefSeq" id="XP_006540198.1">
    <molecule id="P0C5K0-2"/>
    <property type="nucleotide sequence ID" value="XM_006540135.3"/>
</dbReference>
<dbReference type="RefSeq" id="XP_006540200.1">
    <property type="nucleotide sequence ID" value="XM_006540137.3"/>
</dbReference>
<dbReference type="RefSeq" id="XP_030098575.1">
    <molecule id="P0C5K0-2"/>
    <property type="nucleotide sequence ID" value="XM_030242715.1"/>
</dbReference>
<dbReference type="RefSeq" id="XP_036009088.1">
    <molecule id="P0C5K0-2"/>
    <property type="nucleotide sequence ID" value="XM_036153195.1"/>
</dbReference>
<dbReference type="RefSeq" id="XP_036009089.1">
    <molecule id="P0C5K0-2"/>
    <property type="nucleotide sequence ID" value="XM_036153196.1"/>
</dbReference>
<dbReference type="SMR" id="P0C5K0"/>
<dbReference type="FunCoup" id="P0C5K0">
    <property type="interactions" value="70"/>
</dbReference>
<dbReference type="STRING" id="10090.ENSMUSP00000122507"/>
<dbReference type="GlyGen" id="P0C5K0">
    <property type="glycosylation" value="1 site"/>
</dbReference>
<dbReference type="iPTMnet" id="P0C5K0"/>
<dbReference type="PhosphoSitePlus" id="P0C5K0"/>
<dbReference type="PaxDb" id="10090-ENSMUSP00000122507"/>
<dbReference type="ProteomicsDB" id="256923">
    <molecule id="P0C5K0-1"/>
</dbReference>
<dbReference type="ProteomicsDB" id="256924">
    <molecule id="P0C5K0-2"/>
</dbReference>
<dbReference type="Antibodypedia" id="70937">
    <property type="antibodies" value="19 antibodies from 7 providers"/>
</dbReference>
<dbReference type="DNASU" id="381835"/>
<dbReference type="Ensembl" id="ENSMUST00000133272.2">
    <molecule id="P0C5K0-1"/>
    <property type="protein sequence ID" value="ENSMUSP00000120654.2"/>
    <property type="gene ID" value="ENSMUSG00000085272.8"/>
</dbReference>
<dbReference type="Ensembl" id="ENSMUST00000144863.8">
    <molecule id="P0C5K0-2"/>
    <property type="protein sequence ID" value="ENSMUSP00000122507.2"/>
    <property type="gene ID" value="ENSMUSG00000085272.8"/>
</dbReference>
<dbReference type="GeneID" id="381835"/>
<dbReference type="KEGG" id="mmu:381835"/>
<dbReference type="UCSC" id="uc009ezb.1">
    <molecule id="P0C5K0-1"/>
    <property type="organism name" value="mouse"/>
</dbReference>
<dbReference type="AGR" id="MGI:2685924"/>
<dbReference type="CTD" id="100130827"/>
<dbReference type="MGI" id="MGI:2685924">
    <property type="gene designation" value="Sbk3"/>
</dbReference>
<dbReference type="VEuPathDB" id="HostDB:ENSMUSG00000085272"/>
<dbReference type="eggNOG" id="KOG1345">
    <property type="taxonomic scope" value="Eukaryota"/>
</dbReference>
<dbReference type="GeneTree" id="ENSGT00940000154852"/>
<dbReference type="HOGENOM" id="CLU_000288_10_0_1"/>
<dbReference type="InParanoid" id="P0C5K0"/>
<dbReference type="OMA" id="RDQYHLI"/>
<dbReference type="OrthoDB" id="6513151at2759"/>
<dbReference type="PhylomeDB" id="P0C5K0"/>
<dbReference type="TreeFam" id="TF326736"/>
<dbReference type="BioGRID-ORCS" id="381835">
    <property type="hits" value="2 hits in 77 CRISPR screens"/>
</dbReference>
<dbReference type="ChiTaRS" id="Sbk3">
    <property type="organism name" value="mouse"/>
</dbReference>
<dbReference type="PRO" id="PR:P0C5K0"/>
<dbReference type="Proteomes" id="UP000000589">
    <property type="component" value="Chromosome 7"/>
</dbReference>
<dbReference type="RNAct" id="P0C5K0">
    <property type="molecule type" value="protein"/>
</dbReference>
<dbReference type="Bgee" id="ENSMUSG00000085272">
    <property type="expression patterns" value="Expressed in secondary oocyte and 26 other cell types or tissues"/>
</dbReference>
<dbReference type="GO" id="GO:0005524">
    <property type="term" value="F:ATP binding"/>
    <property type="evidence" value="ECO:0007669"/>
    <property type="project" value="UniProtKB-KW"/>
</dbReference>
<dbReference type="GO" id="GO:0106310">
    <property type="term" value="F:protein serine kinase activity"/>
    <property type="evidence" value="ECO:0007669"/>
    <property type="project" value="RHEA"/>
</dbReference>
<dbReference type="GO" id="GO:0004674">
    <property type="term" value="F:protein serine/threonine kinase activity"/>
    <property type="evidence" value="ECO:0007669"/>
    <property type="project" value="UniProtKB-KW"/>
</dbReference>
<dbReference type="FunFam" id="1.10.510.10:FF:002060">
    <property type="entry name" value="SH3 domain-binding kinase family, member 3"/>
    <property type="match status" value="1"/>
</dbReference>
<dbReference type="Gene3D" id="1.10.510.10">
    <property type="entry name" value="Transferase(Phosphotransferase) domain 1"/>
    <property type="match status" value="1"/>
</dbReference>
<dbReference type="InterPro" id="IPR011009">
    <property type="entry name" value="Kinase-like_dom_sf"/>
</dbReference>
<dbReference type="InterPro" id="IPR000719">
    <property type="entry name" value="Prot_kinase_dom"/>
</dbReference>
<dbReference type="InterPro" id="IPR017441">
    <property type="entry name" value="Protein_kinase_ATP_BS"/>
</dbReference>
<dbReference type="InterPro" id="IPR008271">
    <property type="entry name" value="Ser/Thr_kinase_AS"/>
</dbReference>
<dbReference type="PANTHER" id="PTHR24359:SF39">
    <property type="entry name" value="PROTEIN KINASE DOMAIN-CONTAINING PROTEIN"/>
    <property type="match status" value="1"/>
</dbReference>
<dbReference type="PANTHER" id="PTHR24359">
    <property type="entry name" value="SERINE/THREONINE-PROTEIN KINASE SBK1"/>
    <property type="match status" value="1"/>
</dbReference>
<dbReference type="Pfam" id="PF00069">
    <property type="entry name" value="Pkinase"/>
    <property type="match status" value="1"/>
</dbReference>
<dbReference type="SMART" id="SM00220">
    <property type="entry name" value="S_TKc"/>
    <property type="match status" value="1"/>
</dbReference>
<dbReference type="SUPFAM" id="SSF56112">
    <property type="entry name" value="Protein kinase-like (PK-like)"/>
    <property type="match status" value="1"/>
</dbReference>
<dbReference type="PROSITE" id="PS00107">
    <property type="entry name" value="PROTEIN_KINASE_ATP"/>
    <property type="match status" value="1"/>
</dbReference>
<dbReference type="PROSITE" id="PS50011">
    <property type="entry name" value="PROTEIN_KINASE_DOM"/>
    <property type="match status" value="1"/>
</dbReference>
<dbReference type="PROSITE" id="PS00108">
    <property type="entry name" value="PROTEIN_KINASE_ST"/>
    <property type="match status" value="1"/>
</dbReference>
<accession>P0C5K0</accession>
<accession>D3Z5J0</accession>
<accession>E9QLM1</accession>
<proteinExistence type="inferred from homology"/>
<sequence length="361" mass="39117">MERRVLETTEDGDTEEDTAMALQRLVELTASRVTSVRSLCVQYRLIRKLGSGSYGRVLLAQPRQGGQTVALKLLRRDSVLRTTFLREFCVGRCVSSHPGLLQTLGRPLQTPRYFAFAQEFAPCGDLSGMLQEKGLPELMVKRIVAQLAGALDFLHGRGLVHADVKPDNVLVFDPDCNRVALGDLGLTRPEGSPTPAPPVPLPTAPPELCLLLPPNTLPLRPAVDSWALGVLLFCAATACFPWDVALAPDPEFEAFAGWMTTKPQPPRPPAPWDQFAPPALTLLQGLLDLDPETRSPPLAVFDVLGDNWGLQGSGEGSGSLGVIPYKDGEEEEGGSSLEEWTDEEEDEIKDSGGMEADNRAS</sequence>
<keyword id="KW-0025">Alternative splicing</keyword>
<keyword id="KW-0067">ATP-binding</keyword>
<keyword id="KW-0418">Kinase</keyword>
<keyword id="KW-0547">Nucleotide-binding</keyword>
<keyword id="KW-1185">Reference proteome</keyword>
<keyword id="KW-0723">Serine/threonine-protein kinase</keyword>
<keyword id="KW-0808">Transferase</keyword>
<feature type="chain" id="PRO_0000308263" description="Uncharacterized serine/threonine-protein kinase SBK3">
    <location>
        <begin position="1"/>
        <end position="361"/>
    </location>
</feature>
<feature type="domain" description="Protein kinase" evidence="1">
    <location>
        <begin position="43"/>
        <end position="309"/>
    </location>
</feature>
<feature type="region of interest" description="Disordered" evidence="3">
    <location>
        <begin position="312"/>
        <end position="361"/>
    </location>
</feature>
<feature type="compositionally biased region" description="Acidic residues" evidence="3">
    <location>
        <begin position="328"/>
        <end position="348"/>
    </location>
</feature>
<feature type="compositionally biased region" description="Basic and acidic residues" evidence="3">
    <location>
        <begin position="349"/>
        <end position="361"/>
    </location>
</feature>
<feature type="active site" description="Proton acceptor" evidence="1 2">
    <location>
        <position position="163"/>
    </location>
</feature>
<feature type="binding site" evidence="1">
    <location>
        <begin position="49"/>
        <end position="57"/>
    </location>
    <ligand>
        <name>ATP</name>
        <dbReference type="ChEBI" id="CHEBI:30616"/>
    </ligand>
</feature>
<feature type="binding site" evidence="1">
    <location>
        <position position="72"/>
    </location>
    <ligand>
        <name>ATP</name>
        <dbReference type="ChEBI" id="CHEBI:30616"/>
    </ligand>
</feature>
<feature type="splice variant" id="VSP_053507" description="In isoform 2." evidence="4">
    <location>
        <begin position="1"/>
        <end position="19"/>
    </location>
</feature>